<name>LPXT_ECOLI</name>
<proteinExistence type="evidence at protein level"/>
<dbReference type="EC" id="2.7.4.29" evidence="1 4"/>
<dbReference type="EMBL" id="U00096">
    <property type="protein sequence ID" value="AAC75235.2"/>
    <property type="molecule type" value="Genomic_DNA"/>
</dbReference>
<dbReference type="EMBL" id="AP009048">
    <property type="protein sequence ID" value="BAE76645.1"/>
    <property type="molecule type" value="Genomic_DNA"/>
</dbReference>
<dbReference type="RefSeq" id="NP_416679.4">
    <property type="nucleotide sequence ID" value="NC_000913.3"/>
</dbReference>
<dbReference type="RefSeq" id="WP_000594599.1">
    <property type="nucleotide sequence ID" value="NZ_LN832404.1"/>
</dbReference>
<dbReference type="SMR" id="P76445"/>
<dbReference type="BioGRID" id="4260460">
    <property type="interactions" value="5"/>
</dbReference>
<dbReference type="FunCoup" id="P76445">
    <property type="interactions" value="43"/>
</dbReference>
<dbReference type="STRING" id="511145.b2174"/>
<dbReference type="jPOST" id="P76445"/>
<dbReference type="PaxDb" id="511145-b2174"/>
<dbReference type="EnsemblBacteria" id="AAC75235">
    <property type="protein sequence ID" value="AAC75235"/>
    <property type="gene ID" value="b2174"/>
</dbReference>
<dbReference type="GeneID" id="75172303"/>
<dbReference type="GeneID" id="946693"/>
<dbReference type="KEGG" id="ecj:JW2162"/>
<dbReference type="KEGG" id="eco:b2174"/>
<dbReference type="KEGG" id="ecoc:C3026_12165"/>
<dbReference type="PATRIC" id="fig|1411691.4.peg.62"/>
<dbReference type="EchoBASE" id="EB3828"/>
<dbReference type="eggNOG" id="COG0671">
    <property type="taxonomic scope" value="Bacteria"/>
</dbReference>
<dbReference type="HOGENOM" id="CLU_102925_0_0_6"/>
<dbReference type="InParanoid" id="P76445"/>
<dbReference type="OMA" id="ANHGFWF"/>
<dbReference type="OrthoDB" id="8477781at2"/>
<dbReference type="PhylomeDB" id="P76445"/>
<dbReference type="BioCyc" id="EcoCyc:G7146-MONOMER"/>
<dbReference type="BioCyc" id="MetaCyc:G7146-MONOMER"/>
<dbReference type="BRENDA" id="2.7.4.29">
    <property type="organism ID" value="2026"/>
</dbReference>
<dbReference type="UniPathway" id="UPA00030"/>
<dbReference type="PRO" id="PR:P76445"/>
<dbReference type="Proteomes" id="UP000000625">
    <property type="component" value="Chromosome"/>
</dbReference>
<dbReference type="GO" id="GO:0005886">
    <property type="term" value="C:plasma membrane"/>
    <property type="evidence" value="ECO:0000314"/>
    <property type="project" value="EcoCyc"/>
</dbReference>
<dbReference type="GO" id="GO:0016776">
    <property type="term" value="F:phosphotransferase activity, phosphate group as acceptor"/>
    <property type="evidence" value="ECO:0000314"/>
    <property type="project" value="EcoCyc"/>
</dbReference>
<dbReference type="GO" id="GO:0050380">
    <property type="term" value="F:undecaprenyl-diphosphatase activity"/>
    <property type="evidence" value="ECO:0007669"/>
    <property type="project" value="InterPro"/>
</dbReference>
<dbReference type="GO" id="GO:0043165">
    <property type="term" value="P:Gram-negative-bacterium-type cell outer membrane assembly"/>
    <property type="evidence" value="ECO:0007669"/>
    <property type="project" value="InterPro"/>
</dbReference>
<dbReference type="GO" id="GO:0009245">
    <property type="term" value="P:lipid A biosynthetic process"/>
    <property type="evidence" value="ECO:0007669"/>
    <property type="project" value="UniProtKB-UniRule"/>
</dbReference>
<dbReference type="GO" id="GO:0009103">
    <property type="term" value="P:lipopolysaccharide biosynthetic process"/>
    <property type="evidence" value="ECO:0007669"/>
    <property type="project" value="UniProtKB-UniRule"/>
</dbReference>
<dbReference type="GO" id="GO:1903412">
    <property type="term" value="P:response to bile acid"/>
    <property type="evidence" value="ECO:0000314"/>
    <property type="project" value="EcoCyc"/>
</dbReference>
<dbReference type="CDD" id="cd01610">
    <property type="entry name" value="PAP2_like"/>
    <property type="match status" value="1"/>
</dbReference>
<dbReference type="Gene3D" id="1.20.144.10">
    <property type="entry name" value="Phosphatidic acid phosphatase type 2/haloperoxidase"/>
    <property type="match status" value="1"/>
</dbReference>
<dbReference type="HAMAP" id="MF_01945">
    <property type="entry name" value="Lipid_A_LpxT"/>
    <property type="match status" value="1"/>
</dbReference>
<dbReference type="InterPro" id="IPR032908">
    <property type="entry name" value="LpxT"/>
</dbReference>
<dbReference type="InterPro" id="IPR036938">
    <property type="entry name" value="P_Acid_Pase_2/haloperoxi_sf"/>
</dbReference>
<dbReference type="InterPro" id="IPR000326">
    <property type="entry name" value="P_Acid_Pase_2/haloperoxidase"/>
</dbReference>
<dbReference type="Pfam" id="PF01569">
    <property type="entry name" value="PAP2"/>
    <property type="match status" value="1"/>
</dbReference>
<dbReference type="SMART" id="SM00014">
    <property type="entry name" value="acidPPc"/>
    <property type="match status" value="1"/>
</dbReference>
<dbReference type="SUPFAM" id="SSF48317">
    <property type="entry name" value="Acid phosphatase/Vanadium-dependent haloperoxidase"/>
    <property type="match status" value="1"/>
</dbReference>
<gene>
    <name evidence="1 6" type="primary">lpxT</name>
    <name type="synonym">yeiU</name>
    <name type="ordered locus">b2174</name>
    <name type="ordered locus">JW2162</name>
</gene>
<evidence type="ECO:0000255" key="1">
    <source>
        <dbReference type="HAMAP-Rule" id="MF_01945"/>
    </source>
</evidence>
<evidence type="ECO:0000269" key="2">
    <source>
    </source>
</evidence>
<evidence type="ECO:0000269" key="3">
    <source>
    </source>
</evidence>
<evidence type="ECO:0000269" key="4">
    <source>
    </source>
</evidence>
<evidence type="ECO:0000269" key="5">
    <source>
    </source>
</evidence>
<evidence type="ECO:0000303" key="6">
    <source>
    </source>
</evidence>
<evidence type="ECO:0000305" key="7"/>
<evidence type="ECO:0000305" key="8">
    <source>
    </source>
</evidence>
<evidence type="ECO:0000305" key="9">
    <source>
    </source>
</evidence>
<accession>P76445</accession>
<accession>Q2MAR1</accession>
<keyword id="KW-0997">Cell inner membrane</keyword>
<keyword id="KW-1003">Cell membrane</keyword>
<keyword id="KW-0448">Lipopolysaccharide biosynthesis</keyword>
<keyword id="KW-0472">Membrane</keyword>
<keyword id="KW-1185">Reference proteome</keyword>
<keyword id="KW-0808">Transferase</keyword>
<keyword id="KW-0812">Transmembrane</keyword>
<keyword id="KW-1133">Transmembrane helix</keyword>
<reference key="1">
    <citation type="journal article" date="1997" name="Science">
        <title>The complete genome sequence of Escherichia coli K-12.</title>
        <authorList>
            <person name="Blattner F.R."/>
            <person name="Plunkett G. III"/>
            <person name="Bloch C.A."/>
            <person name="Perna N.T."/>
            <person name="Burland V."/>
            <person name="Riley M."/>
            <person name="Collado-Vides J."/>
            <person name="Glasner J.D."/>
            <person name="Rode C.K."/>
            <person name="Mayhew G.F."/>
            <person name="Gregor J."/>
            <person name="Davis N.W."/>
            <person name="Kirkpatrick H.A."/>
            <person name="Goeden M.A."/>
            <person name="Rose D.J."/>
            <person name="Mau B."/>
            <person name="Shao Y."/>
        </authorList>
    </citation>
    <scope>NUCLEOTIDE SEQUENCE [LARGE SCALE GENOMIC DNA]</scope>
    <source>
        <strain>K12 / MG1655 / ATCC 47076</strain>
    </source>
</reference>
<reference key="2">
    <citation type="journal article" date="2006" name="Mol. Syst. Biol.">
        <title>Highly accurate genome sequences of Escherichia coli K-12 strains MG1655 and W3110.</title>
        <authorList>
            <person name="Hayashi K."/>
            <person name="Morooka N."/>
            <person name="Yamamoto Y."/>
            <person name="Fujita K."/>
            <person name="Isono K."/>
            <person name="Choi S."/>
            <person name="Ohtsubo E."/>
            <person name="Baba T."/>
            <person name="Wanner B.L."/>
            <person name="Mori H."/>
            <person name="Horiuchi T."/>
        </authorList>
    </citation>
    <scope>NUCLEOTIDE SEQUENCE [LARGE SCALE GENOMIC DNA]</scope>
    <source>
        <strain>K12 / W3110 / ATCC 27325 / DSM 5911</strain>
    </source>
</reference>
<reference key="3">
    <citation type="journal article" date="2005" name="Science">
        <title>Global topology analysis of the Escherichia coli inner membrane proteome.</title>
        <authorList>
            <person name="Daley D.O."/>
            <person name="Rapp M."/>
            <person name="Granseth E."/>
            <person name="Melen K."/>
            <person name="Drew D."/>
            <person name="von Heijne G."/>
        </authorList>
    </citation>
    <scope>TOPOLOGY [LARGE SCALE ANALYSIS]</scope>
    <source>
        <strain>K12 / MG1655 / ATCC 47076</strain>
    </source>
</reference>
<reference key="4">
    <citation type="journal article" date="2007" name="Microbiology">
        <title>An Escherichia coli undecaprenyl-pyrophosphate phosphatase implicated in undecaprenyl phosphate recycling.</title>
        <authorList>
            <person name="Tatar L.D."/>
            <person name="Marolda C.L."/>
            <person name="Polischuk A.N."/>
            <person name="van Leeuwen D."/>
            <person name="Valvano M.A."/>
        </authorList>
    </citation>
    <scope>FUNCTION AS AN UNDECAPRENYL-PYROPHOSPHATE PHOSPHATASE</scope>
    <scope>SUBCELLULAR LOCATION</scope>
    <scope>TOPOLOGY</scope>
    <source>
        <strain>K12 / W3110 / ATCC 27325 / DSM 5911</strain>
    </source>
</reference>
<reference key="5">
    <citation type="journal article" date="2008" name="Mol. Microbiol.">
        <title>Periplasmic phosphorylation of lipid A is linked to the synthesis of undecaprenyl phosphate.</title>
        <authorList>
            <person name="Touze T."/>
            <person name="Tran A.X."/>
            <person name="Hankins J.V."/>
            <person name="Mengin-Lecreulx D."/>
            <person name="Trent M.S."/>
        </authorList>
    </citation>
    <scope>FUNCTION</scope>
    <scope>CATALYTIC ACTIVITY</scope>
    <scope>BIOPHYSICOCHEMICAL PROPERTIES</scope>
    <scope>PATHWAY</scope>
    <scope>SUBCELLULAR LOCATION</scope>
    <scope>DISRUPTION PHENOTYPE</scope>
</reference>
<reference key="6">
    <citation type="journal article" date="2010" name="Mol. Microbiol.">
        <title>Activation of PmrA inhibits LpxT-dependent phosphorylation of lipid A promoting resistance to antimicrobial peptides.</title>
        <authorList>
            <person name="Herrera C.M."/>
            <person name="Hankins J.V."/>
            <person name="Trent M.S."/>
        </authorList>
    </citation>
    <scope>ACTIVITY REGULATION</scope>
    <scope>MUTAGENESIS OF HIS-190</scope>
</reference>
<protein>
    <recommendedName>
        <fullName evidence="1 7">Lipid A 1-diphosphate synthase</fullName>
        <ecNumber evidence="1 4">2.7.4.29</ecNumber>
    </recommendedName>
    <alternativeName>
        <fullName evidence="7">Kdo(2)-lipid A phosphotransferase</fullName>
    </alternativeName>
    <alternativeName>
        <fullName evidence="1 7">Undecaprenyl pyrophosphate:lipid A 1-phosphate phosphotransferase</fullName>
    </alternativeName>
</protein>
<comment type="function">
    <text evidence="3 4">Involved in the modification of the lipid A domain of lipopolysaccharides (LPS). Transfers a phosphate group from undecaprenyl pyrophosphate (C55-PP) to lipid A to form lipid A 1-diphosphate. Contributes to the recycling of undecaprenyl phosphate (C55-P) (PubMed:18047581). In vitro, has low undecaprenyl-diphosphate phosphatase activity (PubMed:17660416).</text>
</comment>
<comment type="catalytic activity">
    <reaction evidence="1 4">
        <text>di-trans,octa-cis-undecaprenyl diphosphate + alpha-Kdo-(2-&gt;4)-alpha-Kdo-(2-&gt;6)-lipid A (E. coli) = (Kdo)2-lipid A 1-diphosphate + di-trans,octa-cis-undecaprenyl phosphate</text>
        <dbReference type="Rhea" id="RHEA:45468"/>
        <dbReference type="ChEBI" id="CHEBI:58405"/>
        <dbReference type="ChEBI" id="CHEBI:58540"/>
        <dbReference type="ChEBI" id="CHEBI:60392"/>
        <dbReference type="ChEBI" id="CHEBI:85271"/>
        <dbReference type="EC" id="2.7.4.29"/>
    </reaction>
</comment>
<comment type="activity regulation">
    <text evidence="5">Inhibited by BasR. This regulation does not occur at the level of transcription, but rather following the assembly of LpxT into the inner membrane.</text>
</comment>
<comment type="biophysicochemical properties">
    <phDependence>
        <text evidence="4">Optimum pH is 7.0. Significant activity is observed from pH 5.5 to pH 7.5.</text>
    </phDependence>
</comment>
<comment type="pathway">
    <text evidence="1 4">Bacterial outer membrane biogenesis; lipopolysaccharide biosynthesis.</text>
</comment>
<comment type="subcellular location">
    <subcellularLocation>
        <location evidence="1 2 3">Cell inner membrane</location>
        <topology evidence="1 3">Multi-pass membrane protein</topology>
    </subcellularLocation>
    <text evidence="1 4">Transferase activity takes place on the periplamic side of the inner membrane.</text>
</comment>
<comment type="disruption phenotype">
    <text evidence="4">Deletion of the gene results in the production of LPS containing only the bis-phosphorylated lipid A species.</text>
</comment>
<comment type="miscellaneous">
    <text evidence="9">In E.coli, lipid A contains typically a monophosphate unit at positions 1 and 4' (bis-phosphorylated lipid A). However, one-third of the lipid A contains an unsubstituted diphosphate unit at position 1 (lipid A 1-diphosphate).</text>
</comment>
<comment type="similarity">
    <text evidence="1 7">Belongs to the LpxT phosphotransferase family.</text>
</comment>
<organism>
    <name type="scientific">Escherichia coli (strain K12)</name>
    <dbReference type="NCBI Taxonomy" id="83333"/>
    <lineage>
        <taxon>Bacteria</taxon>
        <taxon>Pseudomonadati</taxon>
        <taxon>Pseudomonadota</taxon>
        <taxon>Gammaproteobacteria</taxon>
        <taxon>Enterobacterales</taxon>
        <taxon>Enterobacteriaceae</taxon>
        <taxon>Escherichia</taxon>
    </lineage>
</organism>
<feature type="chain" id="PRO_0000169160" description="Lipid A 1-diphosphate synthase">
    <location>
        <begin position="1"/>
        <end position="237"/>
    </location>
</feature>
<feature type="topological domain" description="Cytoplasmic" evidence="8">
    <location>
        <begin position="1"/>
        <end position="5"/>
    </location>
</feature>
<feature type="transmembrane region" description="Helical" evidence="1">
    <location>
        <begin position="6"/>
        <end position="26"/>
    </location>
</feature>
<feature type="topological domain" description="Periplasmic" evidence="8">
    <location>
        <begin position="27"/>
        <end position="62"/>
    </location>
</feature>
<feature type="transmembrane region" description="Helical" evidence="1">
    <location>
        <begin position="63"/>
        <end position="83"/>
    </location>
</feature>
<feature type="topological domain" description="Cytoplasmic" evidence="8">
    <location>
        <begin position="84"/>
        <end position="90"/>
    </location>
</feature>
<feature type="transmembrane region" description="Helical" evidence="1">
    <location>
        <begin position="91"/>
        <end position="111"/>
    </location>
</feature>
<feature type="topological domain" description="Periplasmic" evidence="8">
    <location>
        <begin position="112"/>
        <end position="145"/>
    </location>
</feature>
<feature type="topological domain" description="Cytoplasmic" evidence="8">
    <location>
        <position position="167"/>
    </location>
</feature>
<feature type="transmembrane region" description="Helical" evidence="1">
    <location>
        <begin position="168"/>
        <end position="188"/>
    </location>
</feature>
<feature type="topological domain" description="Periplasmic" evidence="8">
    <location>
        <begin position="189"/>
        <end position="194"/>
    </location>
</feature>
<feature type="transmembrane region" description="Helical" evidence="1">
    <location>
        <begin position="195"/>
        <end position="215"/>
    </location>
</feature>
<feature type="topological domain" description="Cytoplasmic" evidence="2 3">
    <location>
        <begin position="216"/>
        <end position="237"/>
    </location>
</feature>
<feature type="mutagenesis site" description="Lack of activity." evidence="5">
    <original>H</original>
    <variation>A</variation>
    <location>
        <position position="190"/>
    </location>
</feature>
<sequence length="237" mass="26759">MIKNLPQIVLLNIVGLALFLSWYIPVNHGFWLPIDADIFYFFNQKLVESKAFLWLVALTNNRAFDGCSLLAMGMLMLSFWLKENAPGRRRIVIIGLVMLLTAVVLNQLGQALIPVKRASPTLTFTDINRVSELLSVPTKDASRDSFPGDHGMMLLIFSAFMWRYFGKVAGLIALIIFVVFAFPRVMIGAHWFTDIIVGSMTVILIGLPWVLLTPLSDRLITFFDKSLPGKNKHFQNK</sequence>